<keyword id="KW-0997">Cell inner membrane</keyword>
<keyword id="KW-1003">Cell membrane</keyword>
<keyword id="KW-0472">Membrane</keyword>
<keyword id="KW-1185">Reference proteome</keyword>
<keyword id="KW-0769">Symport</keyword>
<keyword id="KW-0812">Transmembrane</keyword>
<keyword id="KW-1133">Transmembrane helix</keyword>
<keyword id="KW-0813">Transport</keyword>
<sequence>MSHITTEDPATLRLPFKEKLSYGIGDLASNILLDIGTLYLLKFYTDVLGLPGTYGGIIFLISKFFTAFTDMGTGIMLDSRRKIGPKGKFRPFILYASFPVTLLAIANFVGTPFDVTGKTVMATILFMLYGLFFSMMNCSYGAMVPAITKNPNERASLAAWRQGGATLGLLLCTVGFVPVMNLIEGNQQLGYIFAATLFSLFGLLFMWICYSGVKERYVETQPANPAQKPGLLQSFRAIAGNRPLFILCIANLCTLGAFNVKLAIQVYYTQYVLNDPILLSYMGFFSMGCIFIGVFLMPASVRRFGKKKVYIGGLLIWVLGDLLNYFFGGGSVSFVAFSCLAFFGSAFVNSLNWALVSDTVEYGEWRTGVRSEGTVYTGFTFFRKVSQALAGFFPGWMLTQIGYVPNVAQADHTIEGLRQLIFIYPSALAVVTIVAMGCFYSLNEKMYVRIVEEIEARKRTA</sequence>
<proteinExistence type="evidence at protein level"/>
<reference key="1">
    <citation type="journal article" date="1993" name="Nucleic Acids Res.">
        <title>Analysis of the Escherichia coli genome. III. DNA sequence of the region from 87.2 to 89.2 minutes.</title>
        <authorList>
            <person name="Plunkett G. III"/>
            <person name="Burland V."/>
            <person name="Daniels D.L."/>
            <person name="Blattner F.R."/>
        </authorList>
    </citation>
    <scope>NUCLEOTIDE SEQUENCE [LARGE SCALE GENOMIC DNA]</scope>
    <source>
        <strain>K12 / MG1655 / ATCC 47076</strain>
    </source>
</reference>
<reference key="2">
    <citation type="journal article" date="1997" name="Science">
        <title>The complete genome sequence of Escherichia coli K-12.</title>
        <authorList>
            <person name="Blattner F.R."/>
            <person name="Plunkett G. III"/>
            <person name="Bloch C.A."/>
            <person name="Perna N.T."/>
            <person name="Burland V."/>
            <person name="Riley M."/>
            <person name="Collado-Vides J."/>
            <person name="Glasner J.D."/>
            <person name="Rode C.K."/>
            <person name="Mayhew G.F."/>
            <person name="Gregor J."/>
            <person name="Davis N.W."/>
            <person name="Kirkpatrick H.A."/>
            <person name="Goeden M.A."/>
            <person name="Rose D.J."/>
            <person name="Mau B."/>
            <person name="Shao Y."/>
        </authorList>
    </citation>
    <scope>NUCLEOTIDE SEQUENCE [LARGE SCALE GENOMIC DNA]</scope>
    <scope>SEQUENCE REVISION TO C-TERMINUS</scope>
    <source>
        <strain>K12 / MG1655 / ATCC 47076</strain>
    </source>
</reference>
<reference key="3">
    <citation type="journal article" date="2006" name="Mol. Syst. Biol.">
        <title>Highly accurate genome sequences of Escherichia coli K-12 strains MG1655 and W3110.</title>
        <authorList>
            <person name="Hayashi K."/>
            <person name="Morooka N."/>
            <person name="Yamamoto Y."/>
            <person name="Fujita K."/>
            <person name="Isono K."/>
            <person name="Choi S."/>
            <person name="Ohtsubo E."/>
            <person name="Baba T."/>
            <person name="Wanner B.L."/>
            <person name="Mori H."/>
            <person name="Horiuchi T."/>
        </authorList>
    </citation>
    <scope>NUCLEOTIDE SEQUENCE [LARGE SCALE GENOMIC DNA]</scope>
    <source>
        <strain>K12 / W3110 / ATCC 27325 / DSM 5911</strain>
    </source>
</reference>
<reference key="4">
    <citation type="journal article" date="2005" name="Science">
        <title>Global topology analysis of the Escherichia coli inner membrane proteome.</title>
        <authorList>
            <person name="Daley D.O."/>
            <person name="Rapp M."/>
            <person name="Granseth E."/>
            <person name="Melen K."/>
            <person name="Drew D."/>
            <person name="von Heijne G."/>
        </authorList>
    </citation>
    <scope>TOPOLOGY [LARGE SCALE ANALYSIS]</scope>
    <source>
        <strain>K12 / MG1655 / ATCC 47076</strain>
    </source>
</reference>
<reference key="5">
    <citation type="journal article" date="2014" name="Nature">
        <title>Sulphoglycolysis in Escherichia coli K-12 closes a gap in the biogeochemical sulphur cycle.</title>
        <authorList>
            <person name="Denger K."/>
            <person name="Weiss M."/>
            <person name="Felux A.K."/>
            <person name="Schneider A."/>
            <person name="Mayer C."/>
            <person name="Spiteller D."/>
            <person name="Huhn T."/>
            <person name="Cook A.M."/>
            <person name="Schleheck D."/>
        </authorList>
    </citation>
    <scope>FUNCTION</scope>
    <source>
        <strain>K12</strain>
    </source>
</reference>
<comment type="function">
    <text evidence="2">Could be involved in the export of 2,3-dihydroxypropane-1-sulfonate (DHPS).</text>
</comment>
<comment type="subcellular location">
    <subcellularLocation>
        <location>Cell inner membrane</location>
        <topology>Multi-pass membrane protein</topology>
    </subcellularLocation>
</comment>
<comment type="similarity">
    <text evidence="3">Belongs to the sodium:galactoside symporter (TC 2.A.2) family.</text>
</comment>
<comment type="sequence caution" evidence="3">
    <conflict type="erroneous initiation">
        <sequence resource="EMBL-CDS" id="AAB03010"/>
    </conflict>
    <text>Extended N-terminus.</text>
</comment>
<comment type="sequence caution" evidence="3">
    <conflict type="erroneous initiation">
        <sequence resource="EMBL-CDS" id="BAE77432"/>
    </conflict>
    <text>Extended N-terminus.</text>
</comment>
<feature type="chain" id="PRO_0000170769" description="Putative 2,3-dihydroxypropane-1-sulfonate exporter">
    <location>
        <begin position="1"/>
        <end position="461"/>
    </location>
</feature>
<feature type="topological domain" description="Cytoplasmic" evidence="1">
    <location>
        <begin position="1"/>
        <end position="20"/>
    </location>
</feature>
<feature type="transmembrane region" description="Helical" evidence="1">
    <location>
        <begin position="21"/>
        <end position="41"/>
    </location>
</feature>
<feature type="topological domain" description="Periplasmic" evidence="1">
    <location>
        <begin position="42"/>
        <end position="47"/>
    </location>
</feature>
<feature type="transmembrane region" description="Helical" evidence="1">
    <location>
        <begin position="48"/>
        <end position="68"/>
    </location>
</feature>
<feature type="topological domain" description="Cytoplasmic" evidence="1">
    <location>
        <begin position="69"/>
        <end position="92"/>
    </location>
</feature>
<feature type="transmembrane region" description="Helical" evidence="1">
    <location>
        <begin position="93"/>
        <end position="113"/>
    </location>
</feature>
<feature type="topological domain" description="Periplasmic" evidence="1">
    <location>
        <begin position="114"/>
        <end position="123"/>
    </location>
</feature>
<feature type="transmembrane region" description="Helical" evidence="1">
    <location>
        <begin position="124"/>
        <end position="144"/>
    </location>
</feature>
<feature type="topological domain" description="Cytoplasmic" evidence="1">
    <location>
        <begin position="145"/>
        <end position="162"/>
    </location>
</feature>
<feature type="transmembrane region" description="Helical" evidence="1">
    <location>
        <begin position="163"/>
        <end position="183"/>
    </location>
</feature>
<feature type="topological domain" description="Periplasmic" evidence="1">
    <location>
        <begin position="184"/>
        <end position="188"/>
    </location>
</feature>
<feature type="transmembrane region" description="Helical" evidence="1">
    <location>
        <begin position="189"/>
        <end position="209"/>
    </location>
</feature>
<feature type="topological domain" description="Cytoplasmic" evidence="1">
    <location>
        <begin position="210"/>
        <end position="243"/>
    </location>
</feature>
<feature type="transmembrane region" description="Helical" evidence="1">
    <location>
        <begin position="244"/>
        <end position="264"/>
    </location>
</feature>
<feature type="topological domain" description="Periplasmic" evidence="1">
    <location>
        <begin position="265"/>
        <end position="276"/>
    </location>
</feature>
<feature type="transmembrane region" description="Helical" evidence="1">
    <location>
        <begin position="277"/>
        <end position="297"/>
    </location>
</feature>
<feature type="topological domain" description="Cytoplasmic" evidence="1">
    <location>
        <begin position="298"/>
        <end position="308"/>
    </location>
</feature>
<feature type="transmembrane region" description="Helical" evidence="1">
    <location>
        <begin position="309"/>
        <end position="329"/>
    </location>
</feature>
<feature type="topological domain" description="Periplasmic" evidence="1">
    <location>
        <position position="330"/>
    </location>
</feature>
<feature type="transmembrane region" description="Helical" evidence="1">
    <location>
        <begin position="331"/>
        <end position="351"/>
    </location>
</feature>
<feature type="topological domain" description="Cytoplasmic" evidence="1">
    <location>
        <begin position="352"/>
        <end position="387"/>
    </location>
</feature>
<feature type="transmembrane region" description="Helical" evidence="1">
    <location>
        <begin position="388"/>
        <end position="408"/>
    </location>
</feature>
<feature type="topological domain" description="Periplasmic" evidence="1">
    <location>
        <begin position="409"/>
        <end position="419"/>
    </location>
</feature>
<feature type="transmembrane region" description="Helical" evidence="1">
    <location>
        <begin position="420"/>
        <end position="440"/>
    </location>
</feature>
<feature type="topological domain" description="Cytoplasmic" evidence="1">
    <location>
        <begin position="441"/>
        <end position="461"/>
    </location>
</feature>
<feature type="sequence conflict" description="In Ref. 1; AAB03010." evidence="3" ref="1">
    <original>RTA</original>
    <variation>AHGVIIINDAAGRYKE</variation>
    <location>
        <begin position="459"/>
        <end position="461"/>
    </location>
</feature>
<dbReference type="EMBL" id="L19201">
    <property type="protein sequence ID" value="AAB03010.1"/>
    <property type="status" value="ALT_INIT"/>
    <property type="molecule type" value="Genomic_DNA"/>
</dbReference>
<dbReference type="EMBL" id="U00096">
    <property type="protein sequence ID" value="AAC76874.2"/>
    <property type="molecule type" value="Genomic_DNA"/>
</dbReference>
<dbReference type="EMBL" id="AP009048">
    <property type="protein sequence ID" value="BAE77432.1"/>
    <property type="status" value="ALT_INIT"/>
    <property type="molecule type" value="Genomic_DNA"/>
</dbReference>
<dbReference type="PIR" id="H65192">
    <property type="entry name" value="H65192"/>
</dbReference>
<dbReference type="RefSeq" id="NP_418313.4">
    <property type="nucleotide sequence ID" value="NC_000913.3"/>
</dbReference>
<dbReference type="RefSeq" id="WP_000018380.1">
    <property type="nucleotide sequence ID" value="NZ_SSZK01000026.1"/>
</dbReference>
<dbReference type="SMR" id="P32137"/>
<dbReference type="BioGRID" id="4263257">
    <property type="interactions" value="220"/>
</dbReference>
<dbReference type="BioGRID" id="852668">
    <property type="interactions" value="1"/>
</dbReference>
<dbReference type="FunCoup" id="P32137">
    <property type="interactions" value="357"/>
</dbReference>
<dbReference type="IntAct" id="P32137">
    <property type="interactions" value="2"/>
</dbReference>
<dbReference type="STRING" id="511145.b3877"/>
<dbReference type="TCDB" id="2.A.2.3.9">
    <property type="family name" value="the glycoside-pentoside-hexuronide (gph):cation symporter family"/>
</dbReference>
<dbReference type="PaxDb" id="511145-b3877"/>
<dbReference type="EnsemblBacteria" id="AAC76874">
    <property type="protein sequence ID" value="AAC76874"/>
    <property type="gene ID" value="b3877"/>
</dbReference>
<dbReference type="GeneID" id="948371"/>
<dbReference type="KEGG" id="ecj:JW3848"/>
<dbReference type="KEGG" id="eco:b3877"/>
<dbReference type="KEGG" id="ecoc:C3026_20960"/>
<dbReference type="PATRIC" id="fig|1411691.4.peg.2834"/>
<dbReference type="EchoBASE" id="EB1788"/>
<dbReference type="eggNOG" id="COG2211">
    <property type="taxonomic scope" value="Bacteria"/>
</dbReference>
<dbReference type="HOGENOM" id="CLU_027408_0_1_6"/>
<dbReference type="InParanoid" id="P32137"/>
<dbReference type="OrthoDB" id="181905at2"/>
<dbReference type="PhylomeDB" id="P32137"/>
<dbReference type="BioCyc" id="EcoCyc:YIHP-MONOMER"/>
<dbReference type="PRO" id="PR:P32137"/>
<dbReference type="Proteomes" id="UP000000625">
    <property type="component" value="Chromosome"/>
</dbReference>
<dbReference type="GO" id="GO:0005886">
    <property type="term" value="C:plasma membrane"/>
    <property type="evidence" value="ECO:0000314"/>
    <property type="project" value="EcoCyc"/>
</dbReference>
<dbReference type="GO" id="GO:0015293">
    <property type="term" value="F:symporter activity"/>
    <property type="evidence" value="ECO:0007669"/>
    <property type="project" value="UniProtKB-KW"/>
</dbReference>
<dbReference type="GO" id="GO:0008643">
    <property type="term" value="P:carbohydrate transport"/>
    <property type="evidence" value="ECO:0007669"/>
    <property type="project" value="InterPro"/>
</dbReference>
<dbReference type="GO" id="GO:0006814">
    <property type="term" value="P:sodium ion transport"/>
    <property type="evidence" value="ECO:0007669"/>
    <property type="project" value="InterPro"/>
</dbReference>
<dbReference type="GO" id="GO:0055085">
    <property type="term" value="P:transmembrane transport"/>
    <property type="evidence" value="ECO:0000318"/>
    <property type="project" value="GO_Central"/>
</dbReference>
<dbReference type="CDD" id="cd17332">
    <property type="entry name" value="MFS_MelB_like"/>
    <property type="match status" value="1"/>
</dbReference>
<dbReference type="FunFam" id="1.20.1250.20:FF:000063">
    <property type="entry name" value="MFS transporter"/>
    <property type="match status" value="1"/>
</dbReference>
<dbReference type="Gene3D" id="1.20.1250.20">
    <property type="entry name" value="MFS general substrate transporter like domains"/>
    <property type="match status" value="1"/>
</dbReference>
<dbReference type="InterPro" id="IPR039672">
    <property type="entry name" value="MFS_2"/>
</dbReference>
<dbReference type="InterPro" id="IPR036259">
    <property type="entry name" value="MFS_trans_sf"/>
</dbReference>
<dbReference type="InterPro" id="IPR001927">
    <property type="entry name" value="Na/Gal_symport"/>
</dbReference>
<dbReference type="InterPro" id="IPR018043">
    <property type="entry name" value="Na/Gal_symport_CS"/>
</dbReference>
<dbReference type="NCBIfam" id="TIGR00792">
    <property type="entry name" value="gph"/>
    <property type="match status" value="1"/>
</dbReference>
<dbReference type="PANTHER" id="PTHR11328:SF39">
    <property type="entry name" value="2,3-DIHYDROXYPROPANE-1-SULFONATE EXPORTER-RELATED"/>
    <property type="match status" value="1"/>
</dbReference>
<dbReference type="PANTHER" id="PTHR11328">
    <property type="entry name" value="MAJOR FACILITATOR SUPERFAMILY DOMAIN-CONTAINING PROTEIN"/>
    <property type="match status" value="1"/>
</dbReference>
<dbReference type="Pfam" id="PF13347">
    <property type="entry name" value="MFS_2"/>
    <property type="match status" value="1"/>
</dbReference>
<dbReference type="SUPFAM" id="SSF103473">
    <property type="entry name" value="MFS general substrate transporter"/>
    <property type="match status" value="1"/>
</dbReference>
<dbReference type="PROSITE" id="PS00872">
    <property type="entry name" value="NA_GALACTOSIDE_SYMP"/>
    <property type="match status" value="1"/>
</dbReference>
<gene>
    <name type="primary">yihP</name>
    <name type="ordered locus">b3877</name>
    <name type="ordered locus">JW3848</name>
</gene>
<evidence type="ECO:0000255" key="1"/>
<evidence type="ECO:0000269" key="2">
    <source>
    </source>
</evidence>
<evidence type="ECO:0000305" key="3"/>
<protein>
    <recommendedName>
        <fullName>Putative 2,3-dihydroxypropane-1-sulfonate exporter</fullName>
    </recommendedName>
</protein>
<name>YIHP_ECOLI</name>
<organism>
    <name type="scientific">Escherichia coli (strain K12)</name>
    <dbReference type="NCBI Taxonomy" id="83333"/>
    <lineage>
        <taxon>Bacteria</taxon>
        <taxon>Pseudomonadati</taxon>
        <taxon>Pseudomonadota</taxon>
        <taxon>Gammaproteobacteria</taxon>
        <taxon>Enterobacterales</taxon>
        <taxon>Enterobacteriaceae</taxon>
        <taxon>Escherichia</taxon>
    </lineage>
</organism>
<accession>P32137</accession>
<accession>Q2M8H4</accession>